<comment type="function">
    <text evidence="1">Activates expression of the rhaSR operon in response to L-rhamnose.</text>
</comment>
<comment type="subunit">
    <text evidence="1">Binds DNA as a dimer.</text>
</comment>
<comment type="subcellular location">
    <subcellularLocation>
        <location evidence="1">Cytoplasm</location>
    </subcellularLocation>
</comment>
<sequence length="284" mass="32839">MATAVRGLKLQTEDYFLTDKNVVMVAERHPQPVFPLHHHDFDELVIVWRGNGLHLWNDVPYRITRGDMFYVSANDRHSYESVHGLELDNILYIRNRLTLSADWQRLLPGGEHPQSQRHWCLGSEGMDTLREKVDALRQECMKSDALSLQLSEALLLQIALLAARYRHTPDNPQLADAHQLDMLMNALRASIAAPFRFEAFCEQHHFSARSLRSRFKEQTGMSVPHYLRQLRLCKAMELLRYDLQTIGDIAALCGFEDSNYFSVVFHQAFGVSPSAYRQRFLNVE</sequence>
<gene>
    <name evidence="1" type="primary">rhaR</name>
    <name type="ordered locus">PC1_0422</name>
</gene>
<reference key="1">
    <citation type="submission" date="2009-07" db="EMBL/GenBank/DDBJ databases">
        <title>Complete sequence of Pectobacterium carotovorum subsp. carotovorum PC1.</title>
        <authorList>
            <consortium name="US DOE Joint Genome Institute"/>
            <person name="Lucas S."/>
            <person name="Copeland A."/>
            <person name="Lapidus A."/>
            <person name="Glavina del Rio T."/>
            <person name="Tice H."/>
            <person name="Bruce D."/>
            <person name="Goodwin L."/>
            <person name="Pitluck S."/>
            <person name="Munk A.C."/>
            <person name="Brettin T."/>
            <person name="Detter J.C."/>
            <person name="Han C."/>
            <person name="Tapia R."/>
            <person name="Larimer F."/>
            <person name="Land M."/>
            <person name="Hauser L."/>
            <person name="Kyrpides N."/>
            <person name="Mikhailova N."/>
            <person name="Balakrishnan V."/>
            <person name="Glasner J."/>
            <person name="Perna N.T."/>
        </authorList>
    </citation>
    <scope>NUCLEOTIDE SEQUENCE [LARGE SCALE GENOMIC DNA]</scope>
    <source>
        <strain>PC1</strain>
    </source>
</reference>
<accession>C6DJR5</accession>
<organism>
    <name type="scientific">Pectobacterium carotovorum subsp. carotovorum (strain PC1)</name>
    <dbReference type="NCBI Taxonomy" id="561230"/>
    <lineage>
        <taxon>Bacteria</taxon>
        <taxon>Pseudomonadati</taxon>
        <taxon>Pseudomonadota</taxon>
        <taxon>Gammaproteobacteria</taxon>
        <taxon>Enterobacterales</taxon>
        <taxon>Pectobacteriaceae</taxon>
        <taxon>Pectobacterium</taxon>
    </lineage>
</organism>
<evidence type="ECO:0000255" key="1">
    <source>
        <dbReference type="HAMAP-Rule" id="MF_01533"/>
    </source>
</evidence>
<keyword id="KW-0010">Activator</keyword>
<keyword id="KW-0963">Cytoplasm</keyword>
<keyword id="KW-0238">DNA-binding</keyword>
<keyword id="KW-0677">Repeat</keyword>
<keyword id="KW-0684">Rhamnose metabolism</keyword>
<keyword id="KW-0804">Transcription</keyword>
<keyword id="KW-0805">Transcription regulation</keyword>
<dbReference type="EMBL" id="CP001657">
    <property type="protein sequence ID" value="ACT11478.1"/>
    <property type="molecule type" value="Genomic_DNA"/>
</dbReference>
<dbReference type="RefSeq" id="WP_012773134.1">
    <property type="nucleotide sequence ID" value="NC_012917.1"/>
</dbReference>
<dbReference type="SMR" id="C6DJR5"/>
<dbReference type="STRING" id="561230.PC1_0422"/>
<dbReference type="KEGG" id="pct:PC1_0422"/>
<dbReference type="eggNOG" id="COG1917">
    <property type="taxonomic scope" value="Bacteria"/>
</dbReference>
<dbReference type="eggNOG" id="COG4977">
    <property type="taxonomic scope" value="Bacteria"/>
</dbReference>
<dbReference type="HOGENOM" id="CLU_000445_88_5_6"/>
<dbReference type="OrthoDB" id="2547276at2"/>
<dbReference type="Proteomes" id="UP000002736">
    <property type="component" value="Chromosome"/>
</dbReference>
<dbReference type="GO" id="GO:0005737">
    <property type="term" value="C:cytoplasm"/>
    <property type="evidence" value="ECO:0007669"/>
    <property type="project" value="UniProtKB-SubCell"/>
</dbReference>
<dbReference type="GO" id="GO:0003700">
    <property type="term" value="F:DNA-binding transcription factor activity"/>
    <property type="evidence" value="ECO:0007669"/>
    <property type="project" value="UniProtKB-UniRule"/>
</dbReference>
<dbReference type="GO" id="GO:0043565">
    <property type="term" value="F:sequence-specific DNA binding"/>
    <property type="evidence" value="ECO:0007669"/>
    <property type="project" value="InterPro"/>
</dbReference>
<dbReference type="GO" id="GO:0045893">
    <property type="term" value="P:positive regulation of DNA-templated transcription"/>
    <property type="evidence" value="ECO:0007669"/>
    <property type="project" value="UniProtKB-UniRule"/>
</dbReference>
<dbReference type="GO" id="GO:0019299">
    <property type="term" value="P:rhamnose metabolic process"/>
    <property type="evidence" value="ECO:0007669"/>
    <property type="project" value="UniProtKB-UniRule"/>
</dbReference>
<dbReference type="CDD" id="cd06977">
    <property type="entry name" value="cupin_RhaR_RhaS-like_N"/>
    <property type="match status" value="1"/>
</dbReference>
<dbReference type="Gene3D" id="1.10.10.60">
    <property type="entry name" value="Homeodomain-like"/>
    <property type="match status" value="1"/>
</dbReference>
<dbReference type="Gene3D" id="2.60.120.10">
    <property type="entry name" value="Jelly Rolls"/>
    <property type="match status" value="1"/>
</dbReference>
<dbReference type="HAMAP" id="MF_01533">
    <property type="entry name" value="HTH_type_RhaR"/>
    <property type="match status" value="1"/>
</dbReference>
<dbReference type="InterPro" id="IPR003313">
    <property type="entry name" value="AraC-bd"/>
</dbReference>
<dbReference type="InterPro" id="IPR050204">
    <property type="entry name" value="AraC_XylS_family_regulators"/>
</dbReference>
<dbReference type="InterPro" id="IPR009057">
    <property type="entry name" value="Homeodomain-like_sf"/>
</dbReference>
<dbReference type="InterPro" id="IPR018060">
    <property type="entry name" value="HTH_AraC"/>
</dbReference>
<dbReference type="InterPro" id="IPR047220">
    <property type="entry name" value="RhaR_RhaS-like_N"/>
</dbReference>
<dbReference type="InterPro" id="IPR014710">
    <property type="entry name" value="RmlC-like_jellyroll"/>
</dbReference>
<dbReference type="InterPro" id="IPR011051">
    <property type="entry name" value="RmlC_Cupin_sf"/>
</dbReference>
<dbReference type="InterPro" id="IPR023699">
    <property type="entry name" value="Tscrpt_act_RhaR"/>
</dbReference>
<dbReference type="InterPro" id="IPR020449">
    <property type="entry name" value="Tscrpt_reg_AraC-type_HTH"/>
</dbReference>
<dbReference type="PANTHER" id="PTHR46796:SF13">
    <property type="entry name" value="HTH-TYPE TRANSCRIPTIONAL ACTIVATOR RHAS"/>
    <property type="match status" value="1"/>
</dbReference>
<dbReference type="PANTHER" id="PTHR46796">
    <property type="entry name" value="HTH-TYPE TRANSCRIPTIONAL ACTIVATOR RHAS-RELATED"/>
    <property type="match status" value="1"/>
</dbReference>
<dbReference type="Pfam" id="PF02311">
    <property type="entry name" value="AraC_binding"/>
    <property type="match status" value="1"/>
</dbReference>
<dbReference type="Pfam" id="PF12833">
    <property type="entry name" value="HTH_18"/>
    <property type="match status" value="1"/>
</dbReference>
<dbReference type="PRINTS" id="PR00032">
    <property type="entry name" value="HTHARAC"/>
</dbReference>
<dbReference type="SMART" id="SM00342">
    <property type="entry name" value="HTH_ARAC"/>
    <property type="match status" value="1"/>
</dbReference>
<dbReference type="SUPFAM" id="SSF46689">
    <property type="entry name" value="Homeodomain-like"/>
    <property type="match status" value="2"/>
</dbReference>
<dbReference type="SUPFAM" id="SSF51182">
    <property type="entry name" value="RmlC-like cupins"/>
    <property type="match status" value="1"/>
</dbReference>
<dbReference type="PROSITE" id="PS01124">
    <property type="entry name" value="HTH_ARAC_FAMILY_2"/>
    <property type="match status" value="1"/>
</dbReference>
<name>RHAR_PECCP</name>
<proteinExistence type="inferred from homology"/>
<feature type="chain" id="PRO_1000215403" description="HTH-type transcriptional activator RhaR">
    <location>
        <begin position="1"/>
        <end position="284"/>
    </location>
</feature>
<feature type="domain" description="HTH araC/xylS-type" evidence="1">
    <location>
        <begin position="181"/>
        <end position="279"/>
    </location>
</feature>
<feature type="DNA-binding region" description="H-T-H motif" evidence="1">
    <location>
        <begin position="198"/>
        <end position="219"/>
    </location>
</feature>
<feature type="DNA-binding region" description="H-T-H motif" evidence="1">
    <location>
        <begin position="246"/>
        <end position="269"/>
    </location>
</feature>
<feature type="site" description="Interaction with sigma-70" evidence="1">
    <location>
        <position position="248"/>
    </location>
</feature>
<protein>
    <recommendedName>
        <fullName evidence="1">HTH-type transcriptional activator RhaR</fullName>
    </recommendedName>
    <alternativeName>
        <fullName evidence="1">L-rhamnose operon transcriptional activator RhaR</fullName>
    </alternativeName>
</protein>